<dbReference type="EMBL" id="U75348">
    <property type="protein sequence ID" value="AAB48406.1"/>
    <property type="molecule type" value="Genomic_DNA"/>
</dbReference>
<dbReference type="EMBL" id="AY654900">
    <property type="protein sequence ID" value="AAT64949.1"/>
    <property type="status" value="ALT_SEQ"/>
    <property type="molecule type" value="Genomic_DNA"/>
</dbReference>
<dbReference type="RefSeq" id="YP_054496.1">
    <property type="nucleotide sequence ID" value="NC_006077.1"/>
</dbReference>
<dbReference type="SMR" id="P92811"/>
<dbReference type="FunCoup" id="P92811">
    <property type="interactions" value="903"/>
</dbReference>
<dbReference type="STRING" id="284590.P92811"/>
<dbReference type="PaxDb" id="284590-P92811"/>
<dbReference type="GeneID" id="2914050"/>
<dbReference type="KEGG" id="kla:KllafMp01"/>
<dbReference type="InParanoid" id="P92811"/>
<dbReference type="GO" id="GO:0031966">
    <property type="term" value="C:mitochondrial membrane"/>
    <property type="evidence" value="ECO:0007669"/>
    <property type="project" value="UniProtKB-SubCell"/>
</dbReference>
<dbReference type="GO" id="GO:0045259">
    <property type="term" value="C:proton-transporting ATP synthase complex"/>
    <property type="evidence" value="ECO:0007669"/>
    <property type="project" value="UniProtKB-KW"/>
</dbReference>
<dbReference type="GO" id="GO:0033177">
    <property type="term" value="C:proton-transporting two-sector ATPase complex, proton-transporting domain"/>
    <property type="evidence" value="ECO:0007669"/>
    <property type="project" value="InterPro"/>
</dbReference>
<dbReference type="GO" id="GO:0008289">
    <property type="term" value="F:lipid binding"/>
    <property type="evidence" value="ECO:0007669"/>
    <property type="project" value="UniProtKB-KW"/>
</dbReference>
<dbReference type="GO" id="GO:0015078">
    <property type="term" value="F:proton transmembrane transporter activity"/>
    <property type="evidence" value="ECO:0007669"/>
    <property type="project" value="InterPro"/>
</dbReference>
<dbReference type="GO" id="GO:0015986">
    <property type="term" value="P:proton motive force-driven ATP synthesis"/>
    <property type="evidence" value="ECO:0007669"/>
    <property type="project" value="InterPro"/>
</dbReference>
<dbReference type="CDD" id="cd18182">
    <property type="entry name" value="ATP-synt_Fo_c_ATP5G3"/>
    <property type="match status" value="1"/>
</dbReference>
<dbReference type="FunFam" id="1.20.20.10:FF:000014">
    <property type="entry name" value="ATP synthase subunit 9, mitochondrial"/>
    <property type="match status" value="1"/>
</dbReference>
<dbReference type="Gene3D" id="1.20.20.10">
    <property type="entry name" value="F1F0 ATP synthase subunit C"/>
    <property type="match status" value="1"/>
</dbReference>
<dbReference type="HAMAP" id="MF_01396">
    <property type="entry name" value="ATP_synth_c_bact"/>
    <property type="match status" value="1"/>
</dbReference>
<dbReference type="InterPro" id="IPR000454">
    <property type="entry name" value="ATP_synth_F0_csu"/>
</dbReference>
<dbReference type="InterPro" id="IPR020537">
    <property type="entry name" value="ATP_synth_F0_csu_DDCD_BS"/>
</dbReference>
<dbReference type="InterPro" id="IPR038662">
    <property type="entry name" value="ATP_synth_F0_csu_sf"/>
</dbReference>
<dbReference type="InterPro" id="IPR002379">
    <property type="entry name" value="ATPase_proteolipid_c-like_dom"/>
</dbReference>
<dbReference type="InterPro" id="IPR035921">
    <property type="entry name" value="F/V-ATP_Csub_sf"/>
</dbReference>
<dbReference type="PANTHER" id="PTHR10031">
    <property type="entry name" value="ATP SYNTHASE LIPID-BINDING PROTEIN, MITOCHONDRIAL"/>
    <property type="match status" value="1"/>
</dbReference>
<dbReference type="PANTHER" id="PTHR10031:SF0">
    <property type="entry name" value="ATPASE PROTEIN 9"/>
    <property type="match status" value="1"/>
</dbReference>
<dbReference type="Pfam" id="PF00137">
    <property type="entry name" value="ATP-synt_C"/>
    <property type="match status" value="1"/>
</dbReference>
<dbReference type="PRINTS" id="PR00124">
    <property type="entry name" value="ATPASEC"/>
</dbReference>
<dbReference type="SUPFAM" id="SSF81333">
    <property type="entry name" value="F1F0 ATP synthase subunit C"/>
    <property type="match status" value="1"/>
</dbReference>
<dbReference type="PROSITE" id="PS00605">
    <property type="entry name" value="ATPASE_C"/>
    <property type="match status" value="1"/>
</dbReference>
<keyword id="KW-0138">CF(0)</keyword>
<keyword id="KW-0375">Hydrogen ion transport</keyword>
<keyword id="KW-0406">Ion transport</keyword>
<keyword id="KW-0446">Lipid-binding</keyword>
<keyword id="KW-0472">Membrane</keyword>
<keyword id="KW-0496">Mitochondrion</keyword>
<keyword id="KW-0812">Transmembrane</keyword>
<keyword id="KW-1133">Transmembrane helix</keyword>
<keyword id="KW-0813">Transport</keyword>
<evidence type="ECO:0000250" key="1"/>
<evidence type="ECO:0000255" key="2"/>
<evidence type="ECO:0000305" key="3"/>
<comment type="function">
    <text>Mitochondrial membrane ATP synthase (F(1)F(0) ATP synthase or Complex V) produces ATP from ADP in the presence of a proton gradient across the membrane which is generated by electron transport complexes of the respiratory chain. F-type ATPases consist of two structural domains, F(1) - containing the extramembraneous catalytic core and F(0) - containing the membrane proton channel, linked together by a central stalk and a peripheral stalk. During catalysis, ATP synthesis in the catalytic domain of F(1) is coupled via a rotary mechanism of the central stalk subunits to proton translocation. Part of the complex F(0) domain. A homomeric c-ring of probably 10 subunits is part of the complex rotary element.</text>
</comment>
<comment type="subunit">
    <text>F-type ATPases have 2 components, CF(1) - the catalytic core - and CF(0) - the membrane proton channel. CF(1) has five subunits: alpha(3), beta(3), gamma(1), delta(1), epsilon(1). CF(0) has three main subunits: a, b and c.</text>
</comment>
<comment type="subcellular location">
    <subcellularLocation>
        <location evidence="3">Mitochondrion membrane</location>
        <topology evidence="3">Multi-pass membrane protein</topology>
    </subcellularLocation>
</comment>
<comment type="similarity">
    <text evidence="3">Belongs to the ATPase C chain family.</text>
</comment>
<comment type="sequence caution" evidence="3">
    <conflict type="erroneous gene model prediction">
        <sequence resource="EMBL-CDS" id="AAT64949"/>
    </conflict>
</comment>
<geneLocation type="mitochondrion"/>
<feature type="chain" id="PRO_0000112233" description="ATP synthase subunit 9, mitochondrial">
    <location>
        <begin position="1"/>
        <end position="76"/>
    </location>
</feature>
<feature type="transmembrane region" description="Helical" evidence="2">
    <location>
        <begin position="10"/>
        <end position="30"/>
    </location>
</feature>
<feature type="transmembrane region" description="Helical" evidence="2">
    <location>
        <begin position="52"/>
        <end position="72"/>
    </location>
</feature>
<feature type="site" description="Reversibly protonated during proton transport" evidence="1">
    <location>
        <position position="59"/>
    </location>
</feature>
<proteinExistence type="inferred from homology"/>
<accession>P92811</accession>
<accession>Q6DN63</accession>
<reference key="1">
    <citation type="submission" date="1996-10" db="EMBL/GenBank/DDBJ databases">
        <title>K. lactis mitochondrial Fo ATP synthase subunit 9.</title>
        <authorList>
            <person name="Clark-Walker G.D."/>
        </authorList>
    </citation>
    <scope>NUCLEOTIDE SEQUENCE [GENOMIC DNA]</scope>
    <source>
        <strain>WM52</strain>
    </source>
</reference>
<reference key="2">
    <citation type="journal article" date="2005" name="FEMS Yeast Res.">
        <title>Complete nucleotide sequence of the mitochondrial DNA from Kluyveromyces lactis.</title>
        <authorList>
            <person name="Zivanovic Y."/>
            <person name="Wincker P."/>
            <person name="Vacherie B."/>
            <person name="Bolotin-Fukuhara M."/>
            <person name="Fukuhara H."/>
        </authorList>
    </citation>
    <scope>NUCLEOTIDE SEQUENCE [LARGE SCALE GENOMIC DNA]</scope>
    <source>
        <strain>ATCC 76492 / CBS 2359/152 / CLIB 210</strain>
    </source>
</reference>
<sequence>MQLVLAAKYIGAGISTIGLLGAGIGIAIVFSALIQGVSRNPSLKDTLFPFAILGFALSEATGLFCLMISFLLLYAV</sequence>
<gene>
    <name type="primary">ATP9</name>
</gene>
<name>ATP9_KLULA</name>
<organism>
    <name type="scientific">Kluyveromyces lactis (strain ATCC 8585 / CBS 2359 / DSM 70799 / NBRC 1267 / NRRL Y-1140 / WM37)</name>
    <name type="common">Yeast</name>
    <name type="synonym">Candida sphaerica</name>
    <dbReference type="NCBI Taxonomy" id="284590"/>
    <lineage>
        <taxon>Eukaryota</taxon>
        <taxon>Fungi</taxon>
        <taxon>Dikarya</taxon>
        <taxon>Ascomycota</taxon>
        <taxon>Saccharomycotina</taxon>
        <taxon>Saccharomycetes</taxon>
        <taxon>Saccharomycetales</taxon>
        <taxon>Saccharomycetaceae</taxon>
        <taxon>Kluyveromyces</taxon>
    </lineage>
</organism>
<protein>
    <recommendedName>
        <fullName>ATP synthase subunit 9, mitochondrial</fullName>
    </recommendedName>
    <alternativeName>
        <fullName>Lipid-binding protein</fullName>
    </alternativeName>
</protein>